<accession>Q8HVU9</accession>
<name>NDHI_CHAST</name>
<keyword id="KW-0004">4Fe-4S</keyword>
<keyword id="KW-0150">Chloroplast</keyword>
<keyword id="KW-0408">Iron</keyword>
<keyword id="KW-0411">Iron-sulfur</keyword>
<keyword id="KW-0472">Membrane</keyword>
<keyword id="KW-0479">Metal-binding</keyword>
<keyword id="KW-0520">NAD</keyword>
<keyword id="KW-0521">NADP</keyword>
<keyword id="KW-0934">Plastid</keyword>
<keyword id="KW-0618">Plastoquinone</keyword>
<keyword id="KW-0874">Quinone</keyword>
<keyword id="KW-0677">Repeat</keyword>
<keyword id="KW-0793">Thylakoid</keyword>
<keyword id="KW-1278">Translocase</keyword>
<geneLocation type="chloroplast"/>
<dbReference type="EC" id="7.1.1.-" evidence="1"/>
<dbReference type="EMBL" id="AF383763">
    <property type="protein sequence ID" value="AAN61705.1"/>
    <property type="molecule type" value="Genomic_DNA"/>
</dbReference>
<dbReference type="SMR" id="Q8HVU9"/>
<dbReference type="GO" id="GO:0009535">
    <property type="term" value="C:chloroplast thylakoid membrane"/>
    <property type="evidence" value="ECO:0007669"/>
    <property type="project" value="UniProtKB-SubCell"/>
</dbReference>
<dbReference type="GO" id="GO:0051539">
    <property type="term" value="F:4 iron, 4 sulfur cluster binding"/>
    <property type="evidence" value="ECO:0007669"/>
    <property type="project" value="UniProtKB-KW"/>
</dbReference>
<dbReference type="GO" id="GO:0005506">
    <property type="term" value="F:iron ion binding"/>
    <property type="evidence" value="ECO:0007669"/>
    <property type="project" value="UniProtKB-UniRule"/>
</dbReference>
<dbReference type="GO" id="GO:0008137">
    <property type="term" value="F:NADH dehydrogenase (ubiquinone) activity"/>
    <property type="evidence" value="ECO:0007669"/>
    <property type="project" value="InterPro"/>
</dbReference>
<dbReference type="GO" id="GO:0048038">
    <property type="term" value="F:quinone binding"/>
    <property type="evidence" value="ECO:0007669"/>
    <property type="project" value="UniProtKB-KW"/>
</dbReference>
<dbReference type="GO" id="GO:0019684">
    <property type="term" value="P:photosynthesis, light reaction"/>
    <property type="evidence" value="ECO:0007669"/>
    <property type="project" value="UniProtKB-UniRule"/>
</dbReference>
<dbReference type="FunFam" id="3.30.70.3270:FF:000006">
    <property type="entry name" value="NAD(P)H-quinone oxidoreductase subunit I, chloroplastic"/>
    <property type="match status" value="1"/>
</dbReference>
<dbReference type="Gene3D" id="3.30.70.3270">
    <property type="match status" value="1"/>
</dbReference>
<dbReference type="HAMAP" id="MF_01351">
    <property type="entry name" value="NDH1_NuoI"/>
    <property type="match status" value="1"/>
</dbReference>
<dbReference type="InterPro" id="IPR017896">
    <property type="entry name" value="4Fe4S_Fe-S-bd"/>
</dbReference>
<dbReference type="InterPro" id="IPR017900">
    <property type="entry name" value="4Fe4S_Fe_S_CS"/>
</dbReference>
<dbReference type="InterPro" id="IPR010226">
    <property type="entry name" value="NADH_quinone_OxRdtase_chainI"/>
</dbReference>
<dbReference type="InterPro" id="IPR004497">
    <property type="entry name" value="NDHI"/>
</dbReference>
<dbReference type="NCBIfam" id="TIGR00403">
    <property type="entry name" value="ndhI"/>
    <property type="match status" value="1"/>
</dbReference>
<dbReference type="NCBIfam" id="TIGR01971">
    <property type="entry name" value="NuoI"/>
    <property type="match status" value="1"/>
</dbReference>
<dbReference type="NCBIfam" id="NF004537">
    <property type="entry name" value="PRK05888.1-3"/>
    <property type="match status" value="1"/>
</dbReference>
<dbReference type="PANTHER" id="PTHR47275">
    <property type="entry name" value="NAD(P)H-QUINONE OXIDOREDUCTASE SUBUNIT I, CHLOROPLASTIC"/>
    <property type="match status" value="1"/>
</dbReference>
<dbReference type="PANTHER" id="PTHR47275:SF1">
    <property type="entry name" value="NAD(P)H-QUINONE OXIDOREDUCTASE SUBUNIT I, CHLOROPLASTIC"/>
    <property type="match status" value="1"/>
</dbReference>
<dbReference type="Pfam" id="PF00037">
    <property type="entry name" value="Fer4"/>
    <property type="match status" value="2"/>
</dbReference>
<dbReference type="SUPFAM" id="SSF54862">
    <property type="entry name" value="4Fe-4S ferredoxins"/>
    <property type="match status" value="1"/>
</dbReference>
<dbReference type="PROSITE" id="PS00198">
    <property type="entry name" value="4FE4S_FER_1"/>
    <property type="match status" value="2"/>
</dbReference>
<dbReference type="PROSITE" id="PS51379">
    <property type="entry name" value="4FE4S_FER_2"/>
    <property type="match status" value="2"/>
</dbReference>
<feature type="chain" id="PRO_0000245656" description="NAD(P)H-quinone oxidoreductase subunit I, chloroplastic">
    <location>
        <begin position="1"/>
        <end position="166"/>
    </location>
</feature>
<feature type="domain" description="4Fe-4S ferredoxin-type 1" evidence="1">
    <location>
        <begin position="55"/>
        <end position="84"/>
    </location>
</feature>
<feature type="domain" description="4Fe-4S ferredoxin-type 2" evidence="1">
    <location>
        <begin position="95"/>
        <end position="124"/>
    </location>
</feature>
<feature type="binding site" evidence="1">
    <location>
        <position position="64"/>
    </location>
    <ligand>
        <name>[4Fe-4S] cluster</name>
        <dbReference type="ChEBI" id="CHEBI:49883"/>
        <label>1</label>
    </ligand>
</feature>
<feature type="binding site" evidence="1">
    <location>
        <position position="67"/>
    </location>
    <ligand>
        <name>[4Fe-4S] cluster</name>
        <dbReference type="ChEBI" id="CHEBI:49883"/>
        <label>1</label>
    </ligand>
</feature>
<feature type="binding site" evidence="1">
    <location>
        <position position="70"/>
    </location>
    <ligand>
        <name>[4Fe-4S] cluster</name>
        <dbReference type="ChEBI" id="CHEBI:49883"/>
        <label>1</label>
    </ligand>
</feature>
<feature type="binding site" evidence="1">
    <location>
        <position position="74"/>
    </location>
    <ligand>
        <name>[4Fe-4S] cluster</name>
        <dbReference type="ChEBI" id="CHEBI:49883"/>
        <label>2</label>
    </ligand>
</feature>
<feature type="binding site" evidence="1">
    <location>
        <position position="104"/>
    </location>
    <ligand>
        <name>[4Fe-4S] cluster</name>
        <dbReference type="ChEBI" id="CHEBI:49883"/>
        <label>2</label>
    </ligand>
</feature>
<feature type="binding site" evidence="1">
    <location>
        <position position="107"/>
    </location>
    <ligand>
        <name>[4Fe-4S] cluster</name>
        <dbReference type="ChEBI" id="CHEBI:49883"/>
        <label>2</label>
    </ligand>
</feature>
<feature type="binding site" evidence="1">
    <location>
        <position position="110"/>
    </location>
    <ligand>
        <name>[4Fe-4S] cluster</name>
        <dbReference type="ChEBI" id="CHEBI:49883"/>
        <label>2</label>
    </ligand>
</feature>
<feature type="binding site" evidence="1">
    <location>
        <position position="114"/>
    </location>
    <ligand>
        <name>[4Fe-4S] cluster</name>
        <dbReference type="ChEBI" id="CHEBI:49883"/>
        <label>1</label>
    </ligand>
</feature>
<reference key="1">
    <citation type="submission" date="2003-01" db="EMBL/GenBank/DDBJ databases">
        <title>Chloroplast DNA phylogeny of tribe Heliantheae (Asteraceae).</title>
        <authorList>
            <person name="Panero J.L."/>
            <person name="Baldwin B.G."/>
            <person name="Schilling E.E."/>
            <person name="Clevinger J.A."/>
        </authorList>
    </citation>
    <scope>NUCLEOTIDE SEQUENCE [LARGE SCALE GENOMIC DNA]</scope>
</reference>
<evidence type="ECO:0000255" key="1">
    <source>
        <dbReference type="HAMAP-Rule" id="MF_01351"/>
    </source>
</evidence>
<gene>
    <name evidence="1" type="primary">ndhI</name>
</gene>
<comment type="function">
    <text evidence="1">NDH shuttles electrons from NAD(P)H:plastoquinone, via FMN and iron-sulfur (Fe-S) centers, to quinones in the photosynthetic chain and possibly in a chloroplast respiratory chain. The immediate electron acceptor for the enzyme in this species is believed to be plastoquinone. Couples the redox reaction to proton translocation, and thus conserves the redox energy in a proton gradient.</text>
</comment>
<comment type="catalytic activity">
    <reaction evidence="1">
        <text>a plastoquinone + NADH + (n+1) H(+)(in) = a plastoquinol + NAD(+) + n H(+)(out)</text>
        <dbReference type="Rhea" id="RHEA:42608"/>
        <dbReference type="Rhea" id="RHEA-COMP:9561"/>
        <dbReference type="Rhea" id="RHEA-COMP:9562"/>
        <dbReference type="ChEBI" id="CHEBI:15378"/>
        <dbReference type="ChEBI" id="CHEBI:17757"/>
        <dbReference type="ChEBI" id="CHEBI:57540"/>
        <dbReference type="ChEBI" id="CHEBI:57945"/>
        <dbReference type="ChEBI" id="CHEBI:62192"/>
    </reaction>
</comment>
<comment type="catalytic activity">
    <reaction evidence="1">
        <text>a plastoquinone + NADPH + (n+1) H(+)(in) = a plastoquinol + NADP(+) + n H(+)(out)</text>
        <dbReference type="Rhea" id="RHEA:42612"/>
        <dbReference type="Rhea" id="RHEA-COMP:9561"/>
        <dbReference type="Rhea" id="RHEA-COMP:9562"/>
        <dbReference type="ChEBI" id="CHEBI:15378"/>
        <dbReference type="ChEBI" id="CHEBI:17757"/>
        <dbReference type="ChEBI" id="CHEBI:57783"/>
        <dbReference type="ChEBI" id="CHEBI:58349"/>
        <dbReference type="ChEBI" id="CHEBI:62192"/>
    </reaction>
</comment>
<comment type="cofactor">
    <cofactor evidence="1">
        <name>[4Fe-4S] cluster</name>
        <dbReference type="ChEBI" id="CHEBI:49883"/>
    </cofactor>
    <text evidence="1">Binds 2 [4Fe-4S] clusters per subunit.</text>
</comment>
<comment type="subunit">
    <text evidence="1">NDH is composed of at least 16 different subunits, 5 of which are encoded in the nucleus.</text>
</comment>
<comment type="subcellular location">
    <subcellularLocation>
        <location evidence="1">Plastid</location>
        <location evidence="1">Chloroplast thylakoid membrane</location>
        <topology evidence="1">Peripheral membrane protein</topology>
    </subcellularLocation>
</comment>
<comment type="similarity">
    <text evidence="1">Belongs to the complex I 23 kDa subunit family.</text>
</comment>
<sequence>MFPMVTEFMNYGQQTVRATRYIGQGFMITLSHANRLPVTVQYPYEKLITSERFRGRIHFEFDKCIACEVCVRVCPIDLPVVDWKLETDIRKKRLLNYSIDFGICIFCGNCVEYCPTNCLSMTEEYELSTYDRHELNYNQIALGRLPMSIIDDYTIRTILNLPEIKT</sequence>
<proteinExistence type="inferred from homology"/>
<protein>
    <recommendedName>
        <fullName evidence="1">NAD(P)H-quinone oxidoreductase subunit I, chloroplastic</fullName>
        <ecNumber evidence="1">7.1.1.-</ecNumber>
    </recommendedName>
    <alternativeName>
        <fullName evidence="1">NAD(P)H dehydrogenase subunit I</fullName>
        <shortName evidence="1">NDH subunit I</shortName>
    </alternativeName>
    <alternativeName>
        <fullName evidence="1">NADH-plastoquinone oxidoreductase subunit I</fullName>
    </alternativeName>
</protein>
<organism>
    <name type="scientific">Chaenactis santolinoides</name>
    <name type="common">Santolina pincushion</name>
    <dbReference type="NCBI Taxonomy" id="176522"/>
    <lineage>
        <taxon>Eukaryota</taxon>
        <taxon>Viridiplantae</taxon>
        <taxon>Streptophyta</taxon>
        <taxon>Embryophyta</taxon>
        <taxon>Tracheophyta</taxon>
        <taxon>Spermatophyta</taxon>
        <taxon>Magnoliopsida</taxon>
        <taxon>eudicotyledons</taxon>
        <taxon>Gunneridae</taxon>
        <taxon>Pentapetalae</taxon>
        <taxon>asterids</taxon>
        <taxon>campanulids</taxon>
        <taxon>Asterales</taxon>
        <taxon>Asteraceae</taxon>
        <taxon>Asteroideae</taxon>
        <taxon>Heliantheae alliance</taxon>
        <taxon>Chaenactideae</taxon>
        <taxon>Chaenactis</taxon>
    </lineage>
</organism>